<sequence>MQHKLLINGELVSGEGEKQPVYNPATGDVLLEIAEASAEQVDAAVRAADAAFAEWGQTTPKARAECLLKLADVIEENGQVFAELESRNCGKPLHSAFNDEIPAIVDVFRFFAGAARCLNGLAAGEYLEGHTSMIRRDPLGVVASIAPWNYPLMMAAWKLAPALAAGNCVVLKPSEITPLTALKLAELAKDIFPAGVINVLFGRGKTVGDPLTGHPKVRMVSLTGSIATGEHIISHTAPSIKRTHMELGGKAPVIVFDDADIEAVVEGVRTFGYYNAGQDCTAACRIYAQKGIYDTLVEKLGAAVATLKSGAPDDESTELGPLSSLAHLEHVSKAVEEAKGTGHIKVITGGEKRKGNGYYYAPTLLAGALQDDAIVQKEVFGPVVSVTAFDNEEQVVNWANDSQYGLASSVWTKDVGRAHRVSARLQYGCTWVNTHFMLVSEMPHGGQKLSGYGKDMSLYGLEDYTVVRHVMVKH</sequence>
<keyword id="KW-0520">NAD</keyword>
<keyword id="KW-0560">Oxidoreductase</keyword>
<gene>
    <name evidence="1" type="primary">patD</name>
    <name type="ordered locus">EFER_1518</name>
</gene>
<feature type="chain" id="PRO_1000140275" description="Gamma-aminobutyraldehyde dehydrogenase">
    <location>
        <begin position="1"/>
        <end position="474"/>
    </location>
</feature>
<feature type="active site" evidence="1">
    <location>
        <position position="246"/>
    </location>
</feature>
<feature type="active site" description="Nucleophile" evidence="1">
    <location>
        <position position="280"/>
    </location>
</feature>
<feature type="binding site" evidence="1">
    <location>
        <begin position="146"/>
        <end position="148"/>
    </location>
    <ligand>
        <name>NAD(+)</name>
        <dbReference type="ChEBI" id="CHEBI:57540"/>
    </ligand>
</feature>
<feature type="binding site" evidence="1">
    <location>
        <begin position="172"/>
        <end position="175"/>
    </location>
    <ligand>
        <name>NAD(+)</name>
        <dbReference type="ChEBI" id="CHEBI:57540"/>
    </ligand>
</feature>
<feature type="binding site" evidence="1">
    <location>
        <position position="209"/>
    </location>
    <ligand>
        <name>NAD(+)</name>
        <dbReference type="ChEBI" id="CHEBI:57540"/>
    </ligand>
</feature>
<feature type="binding site" evidence="1">
    <location>
        <begin position="225"/>
        <end position="228"/>
    </location>
    <ligand>
        <name>NAD(+)</name>
        <dbReference type="ChEBI" id="CHEBI:57540"/>
    </ligand>
</feature>
<feature type="binding site" evidence="1">
    <location>
        <position position="280"/>
    </location>
    <ligand>
        <name>NAD(+)</name>
        <dbReference type="ChEBI" id="CHEBI:57540"/>
    </ligand>
</feature>
<proteinExistence type="inferred from homology"/>
<organism>
    <name type="scientific">Escherichia fergusonii (strain ATCC 35469 / DSM 13698 / CCUG 18766 / IAM 14443 / JCM 21226 / LMG 7866 / NBRC 102419 / NCTC 12128 / CDC 0568-73)</name>
    <dbReference type="NCBI Taxonomy" id="585054"/>
    <lineage>
        <taxon>Bacteria</taxon>
        <taxon>Pseudomonadati</taxon>
        <taxon>Pseudomonadota</taxon>
        <taxon>Gammaproteobacteria</taxon>
        <taxon>Enterobacterales</taxon>
        <taxon>Enterobacteriaceae</taxon>
        <taxon>Escherichia</taxon>
    </lineage>
</organism>
<protein>
    <recommendedName>
        <fullName evidence="1">Gamma-aminobutyraldehyde dehydrogenase</fullName>
        <shortName evidence="1">ABALDH</shortName>
        <ecNumber evidence="1">1.2.1.19</ecNumber>
    </recommendedName>
    <alternativeName>
        <fullName evidence="1">1-pyrroline dehydrogenase</fullName>
    </alternativeName>
    <alternativeName>
        <fullName evidence="1">4-aminobutanal dehydrogenase</fullName>
    </alternativeName>
    <alternativeName>
        <fullName evidence="1">5-aminopentanal dehydrogenase</fullName>
        <ecNumber evidence="1">1.2.1.-</ecNumber>
    </alternativeName>
</protein>
<dbReference type="EC" id="1.2.1.19" evidence="1"/>
<dbReference type="EC" id="1.2.1.-" evidence="1"/>
<dbReference type="EMBL" id="CU928158">
    <property type="protein sequence ID" value="CAQ89037.1"/>
    <property type="molecule type" value="Genomic_DNA"/>
</dbReference>
<dbReference type="RefSeq" id="WP_001163862.1">
    <property type="nucleotide sequence ID" value="NC_011740.1"/>
</dbReference>
<dbReference type="SMR" id="B7LR95"/>
<dbReference type="GeneID" id="75057439"/>
<dbReference type="KEGG" id="efe:EFER_1518"/>
<dbReference type="HOGENOM" id="CLU_005391_0_0_6"/>
<dbReference type="OrthoDB" id="9812625at2"/>
<dbReference type="UniPathway" id="UPA00188">
    <property type="reaction ID" value="UER00292"/>
</dbReference>
<dbReference type="Proteomes" id="UP000000745">
    <property type="component" value="Chromosome"/>
</dbReference>
<dbReference type="GO" id="GO:0019145">
    <property type="term" value="F:aminobutyraldehyde dehydrogenase (NAD+) activity"/>
    <property type="evidence" value="ECO:0007669"/>
    <property type="project" value="UniProtKB-UniRule"/>
</dbReference>
<dbReference type="GO" id="GO:0051287">
    <property type="term" value="F:NAD binding"/>
    <property type="evidence" value="ECO:0007669"/>
    <property type="project" value="UniProtKB-UniRule"/>
</dbReference>
<dbReference type="GO" id="GO:0019477">
    <property type="term" value="P:L-lysine catabolic process"/>
    <property type="evidence" value="ECO:0007669"/>
    <property type="project" value="UniProtKB-UniRule"/>
</dbReference>
<dbReference type="GO" id="GO:0009447">
    <property type="term" value="P:putrescine catabolic process"/>
    <property type="evidence" value="ECO:0007669"/>
    <property type="project" value="UniProtKB-UniRule"/>
</dbReference>
<dbReference type="CDD" id="cd07092">
    <property type="entry name" value="ALDH_ABALDH-YdcW"/>
    <property type="match status" value="1"/>
</dbReference>
<dbReference type="FunFam" id="3.40.605.10:FF:000001">
    <property type="entry name" value="Aldehyde dehydrogenase 1"/>
    <property type="match status" value="1"/>
</dbReference>
<dbReference type="FunFam" id="3.40.309.10:FF:000010">
    <property type="entry name" value="Gamma-aminobutyraldehyde dehydrogenase"/>
    <property type="match status" value="1"/>
</dbReference>
<dbReference type="Gene3D" id="3.40.605.10">
    <property type="entry name" value="Aldehyde Dehydrogenase, Chain A, domain 1"/>
    <property type="match status" value="1"/>
</dbReference>
<dbReference type="Gene3D" id="3.40.309.10">
    <property type="entry name" value="Aldehyde Dehydrogenase, Chain A, domain 2"/>
    <property type="match status" value="1"/>
</dbReference>
<dbReference type="HAMAP" id="MF_01275">
    <property type="entry name" value="Aldedh_Prr"/>
    <property type="match status" value="1"/>
</dbReference>
<dbReference type="InterPro" id="IPR016161">
    <property type="entry name" value="Ald_DH/histidinol_DH"/>
</dbReference>
<dbReference type="InterPro" id="IPR016163">
    <property type="entry name" value="Ald_DH_C"/>
</dbReference>
<dbReference type="InterPro" id="IPR029510">
    <property type="entry name" value="Ald_DH_CS_GLU"/>
</dbReference>
<dbReference type="InterPro" id="IPR016162">
    <property type="entry name" value="Ald_DH_N"/>
</dbReference>
<dbReference type="InterPro" id="IPR015590">
    <property type="entry name" value="Aldehyde_DH_dom"/>
</dbReference>
<dbReference type="InterPro" id="IPR015657">
    <property type="entry name" value="Aminobutyraldehyde_DH"/>
</dbReference>
<dbReference type="InterPro" id="IPR017749">
    <property type="entry name" value="PatD"/>
</dbReference>
<dbReference type="NCBIfam" id="TIGR03374">
    <property type="entry name" value="ABALDH"/>
    <property type="match status" value="1"/>
</dbReference>
<dbReference type="NCBIfam" id="NF010000">
    <property type="entry name" value="PRK13473.1"/>
    <property type="match status" value="1"/>
</dbReference>
<dbReference type="PANTHER" id="PTHR11699">
    <property type="entry name" value="ALDEHYDE DEHYDROGENASE-RELATED"/>
    <property type="match status" value="1"/>
</dbReference>
<dbReference type="Pfam" id="PF00171">
    <property type="entry name" value="Aldedh"/>
    <property type="match status" value="1"/>
</dbReference>
<dbReference type="SUPFAM" id="SSF53720">
    <property type="entry name" value="ALDH-like"/>
    <property type="match status" value="1"/>
</dbReference>
<dbReference type="PROSITE" id="PS00687">
    <property type="entry name" value="ALDEHYDE_DEHYDR_GLU"/>
    <property type="match status" value="1"/>
</dbReference>
<evidence type="ECO:0000255" key="1">
    <source>
        <dbReference type="HAMAP-Rule" id="MF_01275"/>
    </source>
</evidence>
<name>ABDH_ESCF3</name>
<reference key="1">
    <citation type="journal article" date="2009" name="PLoS Genet.">
        <title>Organised genome dynamics in the Escherichia coli species results in highly diverse adaptive paths.</title>
        <authorList>
            <person name="Touchon M."/>
            <person name="Hoede C."/>
            <person name="Tenaillon O."/>
            <person name="Barbe V."/>
            <person name="Baeriswyl S."/>
            <person name="Bidet P."/>
            <person name="Bingen E."/>
            <person name="Bonacorsi S."/>
            <person name="Bouchier C."/>
            <person name="Bouvet O."/>
            <person name="Calteau A."/>
            <person name="Chiapello H."/>
            <person name="Clermont O."/>
            <person name="Cruveiller S."/>
            <person name="Danchin A."/>
            <person name="Diard M."/>
            <person name="Dossat C."/>
            <person name="Karoui M.E."/>
            <person name="Frapy E."/>
            <person name="Garry L."/>
            <person name="Ghigo J.M."/>
            <person name="Gilles A.M."/>
            <person name="Johnson J."/>
            <person name="Le Bouguenec C."/>
            <person name="Lescat M."/>
            <person name="Mangenot S."/>
            <person name="Martinez-Jehanne V."/>
            <person name="Matic I."/>
            <person name="Nassif X."/>
            <person name="Oztas S."/>
            <person name="Petit M.A."/>
            <person name="Pichon C."/>
            <person name="Rouy Z."/>
            <person name="Ruf C.S."/>
            <person name="Schneider D."/>
            <person name="Tourret J."/>
            <person name="Vacherie B."/>
            <person name="Vallenet D."/>
            <person name="Medigue C."/>
            <person name="Rocha E.P.C."/>
            <person name="Denamur E."/>
        </authorList>
    </citation>
    <scope>NUCLEOTIDE SEQUENCE [LARGE SCALE GENOMIC DNA]</scope>
    <source>
        <strain>ATCC 35469 / DSM 13698 / BCRC 15582 / CCUG 18766 / IAM 14443 / JCM 21226 / LMG 7866 / NBRC 102419 / NCTC 12128 / CDC 0568-73</strain>
    </source>
</reference>
<accession>B7LR95</accession>
<comment type="function">
    <text evidence="1">Catalyzes the oxidation 4-aminobutanal (gamma-aminobutyraldehyde) to 4-aminobutanoate (gamma-aminobutyrate or GABA). This is the second step in one of two pathways for putrescine degradation, where putrescine is converted into 4-aminobutanoate via 4-aminobutanal. Also functions as a 5-aminopentanal dehydrogenase in a a L-lysine degradation pathway to succinate that proceeds via cadaverine, glutarate and L-2-hydroxyglutarate.</text>
</comment>
<comment type="catalytic activity">
    <reaction evidence="1">
        <text>4-aminobutanal + NAD(+) + H2O = 4-aminobutanoate + NADH + 2 H(+)</text>
        <dbReference type="Rhea" id="RHEA:19105"/>
        <dbReference type="ChEBI" id="CHEBI:15377"/>
        <dbReference type="ChEBI" id="CHEBI:15378"/>
        <dbReference type="ChEBI" id="CHEBI:57540"/>
        <dbReference type="ChEBI" id="CHEBI:57945"/>
        <dbReference type="ChEBI" id="CHEBI:58264"/>
        <dbReference type="ChEBI" id="CHEBI:59888"/>
        <dbReference type="EC" id="1.2.1.19"/>
    </reaction>
    <physiologicalReaction direction="left-to-right" evidence="1">
        <dbReference type="Rhea" id="RHEA:19106"/>
    </physiologicalReaction>
</comment>
<comment type="catalytic activity">
    <reaction evidence="1">
        <text>5-aminopentanal + NAD(+) + H2O = 5-aminopentanoate + NADH + 2 H(+)</text>
        <dbReference type="Rhea" id="RHEA:61632"/>
        <dbReference type="ChEBI" id="CHEBI:15377"/>
        <dbReference type="ChEBI" id="CHEBI:15378"/>
        <dbReference type="ChEBI" id="CHEBI:57540"/>
        <dbReference type="ChEBI" id="CHEBI:57945"/>
        <dbReference type="ChEBI" id="CHEBI:144896"/>
        <dbReference type="ChEBI" id="CHEBI:356010"/>
    </reaction>
    <physiologicalReaction direction="left-to-right" evidence="1">
        <dbReference type="Rhea" id="RHEA:61633"/>
    </physiologicalReaction>
</comment>
<comment type="pathway">
    <text evidence="1">Amine and polyamine degradation; putrescine degradation; 4-aminobutanoate from 4-aminobutanal: step 1/1.</text>
</comment>
<comment type="pathway">
    <text evidence="1">Amino-acid degradation.</text>
</comment>
<comment type="subunit">
    <text evidence="1">Homotetramer.</text>
</comment>
<comment type="miscellaneous">
    <text evidence="1">4-aminobutanal can spontaneously cyclize to 1-pyrroline, and 5-aminopentanal to 1-piperideine.</text>
</comment>
<comment type="similarity">
    <text evidence="1">Belongs to the aldehyde dehydrogenase family. Gamma-aminobutyraldehyde dehydrogenase subfamily.</text>
</comment>